<proteinExistence type="inferred from homology"/>
<dbReference type="EC" id="3.6.5.-" evidence="1"/>
<dbReference type="EMBL" id="CR522870">
    <property type="protein sequence ID" value="CAG37319.1"/>
    <property type="molecule type" value="Genomic_DNA"/>
</dbReference>
<dbReference type="RefSeq" id="WP_011189831.1">
    <property type="nucleotide sequence ID" value="NC_006138.1"/>
</dbReference>
<dbReference type="SMR" id="Q6AK07"/>
<dbReference type="STRING" id="177439.DP2590"/>
<dbReference type="KEGG" id="dps:DP2590"/>
<dbReference type="eggNOG" id="COG0536">
    <property type="taxonomic scope" value="Bacteria"/>
</dbReference>
<dbReference type="HOGENOM" id="CLU_011747_2_0_7"/>
<dbReference type="OrthoDB" id="9807318at2"/>
<dbReference type="Proteomes" id="UP000000602">
    <property type="component" value="Chromosome"/>
</dbReference>
<dbReference type="GO" id="GO:0005737">
    <property type="term" value="C:cytoplasm"/>
    <property type="evidence" value="ECO:0007669"/>
    <property type="project" value="UniProtKB-SubCell"/>
</dbReference>
<dbReference type="GO" id="GO:0005525">
    <property type="term" value="F:GTP binding"/>
    <property type="evidence" value="ECO:0007669"/>
    <property type="project" value="UniProtKB-UniRule"/>
</dbReference>
<dbReference type="GO" id="GO:0003924">
    <property type="term" value="F:GTPase activity"/>
    <property type="evidence" value="ECO:0007669"/>
    <property type="project" value="UniProtKB-UniRule"/>
</dbReference>
<dbReference type="GO" id="GO:0000287">
    <property type="term" value="F:magnesium ion binding"/>
    <property type="evidence" value="ECO:0007669"/>
    <property type="project" value="InterPro"/>
</dbReference>
<dbReference type="GO" id="GO:0042254">
    <property type="term" value="P:ribosome biogenesis"/>
    <property type="evidence" value="ECO:0007669"/>
    <property type="project" value="UniProtKB-UniRule"/>
</dbReference>
<dbReference type="CDD" id="cd01898">
    <property type="entry name" value="Obg"/>
    <property type="match status" value="1"/>
</dbReference>
<dbReference type="CDD" id="cd22249">
    <property type="entry name" value="UDM1_RNF168_RNF169-like"/>
    <property type="match status" value="1"/>
</dbReference>
<dbReference type="FunFam" id="2.70.210.12:FF:000001">
    <property type="entry name" value="GTPase Obg"/>
    <property type="match status" value="1"/>
</dbReference>
<dbReference type="Gene3D" id="2.70.210.12">
    <property type="entry name" value="GTP1/OBG domain"/>
    <property type="match status" value="1"/>
</dbReference>
<dbReference type="Gene3D" id="3.40.50.300">
    <property type="entry name" value="P-loop containing nucleotide triphosphate hydrolases"/>
    <property type="match status" value="1"/>
</dbReference>
<dbReference type="HAMAP" id="MF_01454">
    <property type="entry name" value="GTPase_Obg"/>
    <property type="match status" value="1"/>
</dbReference>
<dbReference type="InterPro" id="IPR031167">
    <property type="entry name" value="G_OBG"/>
</dbReference>
<dbReference type="InterPro" id="IPR006073">
    <property type="entry name" value="GTP-bd"/>
</dbReference>
<dbReference type="InterPro" id="IPR014100">
    <property type="entry name" value="GTP-bd_Obg/CgtA"/>
</dbReference>
<dbReference type="InterPro" id="IPR006074">
    <property type="entry name" value="GTP1-OBG_CS"/>
</dbReference>
<dbReference type="InterPro" id="IPR006169">
    <property type="entry name" value="GTP1_OBG_dom"/>
</dbReference>
<dbReference type="InterPro" id="IPR036726">
    <property type="entry name" value="GTP1_OBG_dom_sf"/>
</dbReference>
<dbReference type="InterPro" id="IPR045086">
    <property type="entry name" value="OBG_GTPase"/>
</dbReference>
<dbReference type="InterPro" id="IPR027417">
    <property type="entry name" value="P-loop_NTPase"/>
</dbReference>
<dbReference type="NCBIfam" id="TIGR02729">
    <property type="entry name" value="Obg_CgtA"/>
    <property type="match status" value="1"/>
</dbReference>
<dbReference type="NCBIfam" id="NF008955">
    <property type="entry name" value="PRK12297.1"/>
    <property type="match status" value="1"/>
</dbReference>
<dbReference type="NCBIfam" id="NF008956">
    <property type="entry name" value="PRK12299.1"/>
    <property type="match status" value="1"/>
</dbReference>
<dbReference type="PANTHER" id="PTHR11702">
    <property type="entry name" value="DEVELOPMENTALLY REGULATED GTP-BINDING PROTEIN-RELATED"/>
    <property type="match status" value="1"/>
</dbReference>
<dbReference type="PANTHER" id="PTHR11702:SF31">
    <property type="entry name" value="MITOCHONDRIAL RIBOSOME-ASSOCIATED GTPASE 2"/>
    <property type="match status" value="1"/>
</dbReference>
<dbReference type="Pfam" id="PF01018">
    <property type="entry name" value="GTP1_OBG"/>
    <property type="match status" value="1"/>
</dbReference>
<dbReference type="Pfam" id="PF01926">
    <property type="entry name" value="MMR_HSR1"/>
    <property type="match status" value="1"/>
</dbReference>
<dbReference type="PIRSF" id="PIRSF002401">
    <property type="entry name" value="GTP_bd_Obg/CgtA"/>
    <property type="match status" value="1"/>
</dbReference>
<dbReference type="PRINTS" id="PR00326">
    <property type="entry name" value="GTP1OBG"/>
</dbReference>
<dbReference type="SUPFAM" id="SSF82051">
    <property type="entry name" value="Obg GTP-binding protein N-terminal domain"/>
    <property type="match status" value="1"/>
</dbReference>
<dbReference type="SUPFAM" id="SSF52540">
    <property type="entry name" value="P-loop containing nucleoside triphosphate hydrolases"/>
    <property type="match status" value="1"/>
</dbReference>
<dbReference type="PROSITE" id="PS51710">
    <property type="entry name" value="G_OBG"/>
    <property type="match status" value="1"/>
</dbReference>
<dbReference type="PROSITE" id="PS00905">
    <property type="entry name" value="GTP1_OBG"/>
    <property type="match status" value="1"/>
</dbReference>
<dbReference type="PROSITE" id="PS51883">
    <property type="entry name" value="OBG"/>
    <property type="match status" value="1"/>
</dbReference>
<reference key="1">
    <citation type="journal article" date="2004" name="Environ. Microbiol.">
        <title>The genome of Desulfotalea psychrophila, a sulfate-reducing bacterium from permanently cold Arctic sediments.</title>
        <authorList>
            <person name="Rabus R."/>
            <person name="Ruepp A."/>
            <person name="Frickey T."/>
            <person name="Rattei T."/>
            <person name="Fartmann B."/>
            <person name="Stark M."/>
            <person name="Bauer M."/>
            <person name="Zibat A."/>
            <person name="Lombardot T."/>
            <person name="Becker I."/>
            <person name="Amann J."/>
            <person name="Gellner K."/>
            <person name="Teeling H."/>
            <person name="Leuschner W.D."/>
            <person name="Gloeckner F.-O."/>
            <person name="Lupas A.N."/>
            <person name="Amann R."/>
            <person name="Klenk H.-P."/>
        </authorList>
    </citation>
    <scope>NUCLEOTIDE SEQUENCE [LARGE SCALE GENOMIC DNA]</scope>
    <source>
        <strain>DSM 12343 / LSv54</strain>
    </source>
</reference>
<gene>
    <name evidence="1" type="primary">obg</name>
    <name type="ordered locus">DP2590</name>
</gene>
<feature type="chain" id="PRO_0000385887" description="GTPase Obg">
    <location>
        <begin position="1"/>
        <end position="372"/>
    </location>
</feature>
<feature type="domain" description="Obg" evidence="2">
    <location>
        <begin position="1"/>
        <end position="159"/>
    </location>
</feature>
<feature type="domain" description="OBG-type G" evidence="1">
    <location>
        <begin position="160"/>
        <end position="329"/>
    </location>
</feature>
<feature type="region of interest" description="Disordered" evidence="3">
    <location>
        <begin position="121"/>
        <end position="141"/>
    </location>
</feature>
<feature type="region of interest" description="Disordered" evidence="3">
    <location>
        <begin position="346"/>
        <end position="372"/>
    </location>
</feature>
<feature type="binding site" evidence="1">
    <location>
        <begin position="166"/>
        <end position="173"/>
    </location>
    <ligand>
        <name>GTP</name>
        <dbReference type="ChEBI" id="CHEBI:37565"/>
    </ligand>
</feature>
<feature type="binding site" evidence="1">
    <location>
        <position position="173"/>
    </location>
    <ligand>
        <name>Mg(2+)</name>
        <dbReference type="ChEBI" id="CHEBI:18420"/>
    </ligand>
</feature>
<feature type="binding site" evidence="1">
    <location>
        <begin position="191"/>
        <end position="195"/>
    </location>
    <ligand>
        <name>GTP</name>
        <dbReference type="ChEBI" id="CHEBI:37565"/>
    </ligand>
</feature>
<feature type="binding site" evidence="1">
    <location>
        <position position="193"/>
    </location>
    <ligand>
        <name>Mg(2+)</name>
        <dbReference type="ChEBI" id="CHEBI:18420"/>
    </ligand>
</feature>
<feature type="binding site" evidence="1">
    <location>
        <begin position="213"/>
        <end position="216"/>
    </location>
    <ligand>
        <name>GTP</name>
        <dbReference type="ChEBI" id="CHEBI:37565"/>
    </ligand>
</feature>
<feature type="binding site" evidence="1">
    <location>
        <begin position="280"/>
        <end position="283"/>
    </location>
    <ligand>
        <name>GTP</name>
        <dbReference type="ChEBI" id="CHEBI:37565"/>
    </ligand>
</feature>
<feature type="binding site" evidence="1">
    <location>
        <begin position="310"/>
        <end position="312"/>
    </location>
    <ligand>
        <name>GTP</name>
        <dbReference type="ChEBI" id="CHEBI:37565"/>
    </ligand>
</feature>
<sequence length="372" mass="41004">MAFVDEAKFFVKAGDGGNGCVSFRREKFVPKGGPNGGDGGKGGDVIMVASSKVQSLIDFRYRSHFKAERGVHGQGRDMHGRGGKDCYMDIPVGSVVKDSETGRVLADLSEEGEEFVVAQGGSGGMGNPHFSSGSNRTPRVATKGKLGEEKWLLIELKLMADVGLVGLPNAGKSTLLSKLSAANPKVADYPFTTLEPQLGMLHFPMRNSCIIADIPGLVEGAHQGVGLGHKFLRHVERTKILVHVIDASADDPFSDYDIIGNELRSYKEELADRAKILVLNKCDEFDFDKDLLPDFIEARGLEPKNVLFISAITGEGVDKLVKLIGDIIDDMEYQELKQKREEERLQDLKKQKEEERRQELKKQKEEEQAKDE</sequence>
<protein>
    <recommendedName>
        <fullName evidence="1">GTPase Obg</fullName>
        <ecNumber evidence="1">3.6.5.-</ecNumber>
    </recommendedName>
    <alternativeName>
        <fullName evidence="1">GTP-binding protein Obg</fullName>
    </alternativeName>
</protein>
<name>OBG_DESPS</name>
<organism>
    <name type="scientific">Desulfotalea psychrophila (strain LSv54 / DSM 12343)</name>
    <dbReference type="NCBI Taxonomy" id="177439"/>
    <lineage>
        <taxon>Bacteria</taxon>
        <taxon>Pseudomonadati</taxon>
        <taxon>Thermodesulfobacteriota</taxon>
        <taxon>Desulfobulbia</taxon>
        <taxon>Desulfobulbales</taxon>
        <taxon>Desulfocapsaceae</taxon>
        <taxon>Desulfotalea</taxon>
    </lineage>
</organism>
<evidence type="ECO:0000255" key="1">
    <source>
        <dbReference type="HAMAP-Rule" id="MF_01454"/>
    </source>
</evidence>
<evidence type="ECO:0000255" key="2">
    <source>
        <dbReference type="PROSITE-ProRule" id="PRU01231"/>
    </source>
</evidence>
<evidence type="ECO:0000256" key="3">
    <source>
        <dbReference type="SAM" id="MobiDB-lite"/>
    </source>
</evidence>
<comment type="function">
    <text evidence="1">An essential GTPase which binds GTP, GDP and possibly (p)ppGpp with moderate affinity, with high nucleotide exchange rates and a fairly low GTP hydrolysis rate. Plays a role in control of the cell cycle, stress response, ribosome biogenesis and in those bacteria that undergo differentiation, in morphogenesis control.</text>
</comment>
<comment type="cofactor">
    <cofactor evidence="1">
        <name>Mg(2+)</name>
        <dbReference type="ChEBI" id="CHEBI:18420"/>
    </cofactor>
</comment>
<comment type="subunit">
    <text evidence="1">Monomer.</text>
</comment>
<comment type="subcellular location">
    <subcellularLocation>
        <location evidence="1">Cytoplasm</location>
    </subcellularLocation>
</comment>
<comment type="similarity">
    <text evidence="1">Belongs to the TRAFAC class OBG-HflX-like GTPase superfamily. OBG GTPase family.</text>
</comment>
<keyword id="KW-0963">Cytoplasm</keyword>
<keyword id="KW-0342">GTP-binding</keyword>
<keyword id="KW-0378">Hydrolase</keyword>
<keyword id="KW-0460">Magnesium</keyword>
<keyword id="KW-0479">Metal-binding</keyword>
<keyword id="KW-0547">Nucleotide-binding</keyword>
<keyword id="KW-1185">Reference proteome</keyword>
<accession>Q6AK07</accession>